<gene>
    <name evidence="1" type="primary">metAS</name>
    <name type="ordered locus">Sama_1374</name>
</gene>
<dbReference type="EC" id="2.3.1.46" evidence="1"/>
<dbReference type="EMBL" id="CP000507">
    <property type="protein sequence ID" value="ABL99581.1"/>
    <property type="molecule type" value="Genomic_DNA"/>
</dbReference>
<dbReference type="RefSeq" id="WP_011759489.1">
    <property type="nucleotide sequence ID" value="NC_008700.1"/>
</dbReference>
<dbReference type="SMR" id="A1S5C5"/>
<dbReference type="STRING" id="326297.Sama_1374"/>
<dbReference type="KEGG" id="saz:Sama_1374"/>
<dbReference type="eggNOG" id="COG1897">
    <property type="taxonomic scope" value="Bacteria"/>
</dbReference>
<dbReference type="HOGENOM" id="CLU_057851_0_1_6"/>
<dbReference type="OrthoDB" id="9772423at2"/>
<dbReference type="UniPathway" id="UPA00051">
    <property type="reaction ID" value="UER00075"/>
</dbReference>
<dbReference type="Proteomes" id="UP000009175">
    <property type="component" value="Chromosome"/>
</dbReference>
<dbReference type="GO" id="GO:0005737">
    <property type="term" value="C:cytoplasm"/>
    <property type="evidence" value="ECO:0007669"/>
    <property type="project" value="UniProtKB-SubCell"/>
</dbReference>
<dbReference type="GO" id="GO:0004414">
    <property type="term" value="F:homoserine O-acetyltransferase activity"/>
    <property type="evidence" value="ECO:0007669"/>
    <property type="project" value="UniProtKB-UniRule"/>
</dbReference>
<dbReference type="GO" id="GO:0008899">
    <property type="term" value="F:homoserine O-succinyltransferase activity"/>
    <property type="evidence" value="ECO:0007669"/>
    <property type="project" value="UniProtKB-EC"/>
</dbReference>
<dbReference type="GO" id="GO:0019281">
    <property type="term" value="P:L-methionine biosynthetic process from homoserine via O-succinyl-L-homoserine and cystathionine"/>
    <property type="evidence" value="ECO:0007669"/>
    <property type="project" value="InterPro"/>
</dbReference>
<dbReference type="CDD" id="cd03131">
    <property type="entry name" value="GATase1_HTS"/>
    <property type="match status" value="1"/>
</dbReference>
<dbReference type="FunFam" id="3.40.50.880:FF:000004">
    <property type="entry name" value="Homoserine O-succinyltransferase"/>
    <property type="match status" value="1"/>
</dbReference>
<dbReference type="Gene3D" id="3.40.50.880">
    <property type="match status" value="1"/>
</dbReference>
<dbReference type="HAMAP" id="MF_00295">
    <property type="entry name" value="MetA_acyltransf"/>
    <property type="match status" value="1"/>
</dbReference>
<dbReference type="InterPro" id="IPR029062">
    <property type="entry name" value="Class_I_gatase-like"/>
</dbReference>
<dbReference type="InterPro" id="IPR005697">
    <property type="entry name" value="HST_MetA"/>
</dbReference>
<dbReference type="InterPro" id="IPR033752">
    <property type="entry name" value="MetA_family"/>
</dbReference>
<dbReference type="NCBIfam" id="TIGR01001">
    <property type="entry name" value="metA"/>
    <property type="match status" value="1"/>
</dbReference>
<dbReference type="PANTHER" id="PTHR20919">
    <property type="entry name" value="HOMOSERINE O-SUCCINYLTRANSFERASE"/>
    <property type="match status" value="1"/>
</dbReference>
<dbReference type="PANTHER" id="PTHR20919:SF0">
    <property type="entry name" value="HOMOSERINE O-SUCCINYLTRANSFERASE"/>
    <property type="match status" value="1"/>
</dbReference>
<dbReference type="Pfam" id="PF04204">
    <property type="entry name" value="HTS"/>
    <property type="match status" value="1"/>
</dbReference>
<dbReference type="PIRSF" id="PIRSF000450">
    <property type="entry name" value="H_ser_succinyltr"/>
    <property type="match status" value="1"/>
</dbReference>
<dbReference type="SUPFAM" id="SSF52317">
    <property type="entry name" value="Class I glutamine amidotransferase-like"/>
    <property type="match status" value="1"/>
</dbReference>
<comment type="function">
    <text evidence="1">Transfers a succinyl group from succinyl-CoA to L-homoserine, forming succinyl-L-homoserine.</text>
</comment>
<comment type="catalytic activity">
    <reaction evidence="1">
        <text>L-homoserine + succinyl-CoA = O-succinyl-L-homoserine + CoA</text>
        <dbReference type="Rhea" id="RHEA:22008"/>
        <dbReference type="ChEBI" id="CHEBI:57287"/>
        <dbReference type="ChEBI" id="CHEBI:57292"/>
        <dbReference type="ChEBI" id="CHEBI:57476"/>
        <dbReference type="ChEBI" id="CHEBI:57661"/>
        <dbReference type="EC" id="2.3.1.46"/>
    </reaction>
</comment>
<comment type="pathway">
    <text evidence="1">Amino-acid biosynthesis; L-methionine biosynthesis via de novo pathway; O-succinyl-L-homoserine from L-homoserine: step 1/1.</text>
</comment>
<comment type="subcellular location">
    <subcellularLocation>
        <location evidence="1">Cytoplasm</location>
    </subcellularLocation>
</comment>
<comment type="similarity">
    <text evidence="1">Belongs to the MetA family.</text>
</comment>
<protein>
    <recommendedName>
        <fullName evidence="1">Homoserine O-succinyltransferase</fullName>
        <shortName evidence="1">HST</shortName>
        <ecNumber evidence="1">2.3.1.46</ecNumber>
    </recommendedName>
    <alternativeName>
        <fullName evidence="1">Homoserine transsuccinylase</fullName>
        <shortName evidence="1">HTS</shortName>
    </alternativeName>
</protein>
<evidence type="ECO:0000255" key="1">
    <source>
        <dbReference type="HAMAP-Rule" id="MF_00295"/>
    </source>
</evidence>
<keyword id="KW-0012">Acyltransferase</keyword>
<keyword id="KW-0028">Amino-acid biosynthesis</keyword>
<keyword id="KW-0963">Cytoplasm</keyword>
<keyword id="KW-0486">Methionine biosynthesis</keyword>
<keyword id="KW-1185">Reference proteome</keyword>
<keyword id="KW-0808">Transferase</keyword>
<name>METAS_SHEAM</name>
<sequence length="316" mass="36314">MPVKIPDNLPAAEILSAENIFVMSETRAAHQDIRPMKVLILNLMPNKIETETQLLRLLGNTPLQVDVDLLRIHDKESRHTSLDHMNTFYRDFEDVRHKNYDGLIITGAPLGQLDFEEVTYWDHIREIIDWSQSHVTSVLFLCWAAHAGLYHLYGLKRELLKTKRSGVFVHSRSCDHHPLLRGFDEEFFAPHSRYAEIPVAQIHAHPALQVLAESDEAGAYLVLSRNSRNLFVIGHPEYQKSTLSDEYHRDLAAGINPEIPQNYFRNDDPAQPPVARWHSHGSLLVSNWLNYYVYQLTPYDLSDMSAITPWEASSKS</sequence>
<organism>
    <name type="scientific">Shewanella amazonensis (strain ATCC BAA-1098 / SB2B)</name>
    <dbReference type="NCBI Taxonomy" id="326297"/>
    <lineage>
        <taxon>Bacteria</taxon>
        <taxon>Pseudomonadati</taxon>
        <taxon>Pseudomonadota</taxon>
        <taxon>Gammaproteobacteria</taxon>
        <taxon>Alteromonadales</taxon>
        <taxon>Shewanellaceae</taxon>
        <taxon>Shewanella</taxon>
    </lineage>
</organism>
<proteinExistence type="inferred from homology"/>
<feature type="chain" id="PRO_1000021832" description="Homoserine O-succinyltransferase">
    <location>
        <begin position="1"/>
        <end position="316"/>
    </location>
</feature>
<feature type="active site" description="Acyl-thioester intermediate" evidence="1">
    <location>
        <position position="142"/>
    </location>
</feature>
<feature type="active site" description="Proton acceptor" evidence="1">
    <location>
        <position position="235"/>
    </location>
</feature>
<feature type="active site" evidence="1">
    <location>
        <position position="237"/>
    </location>
</feature>
<feature type="binding site" evidence="1">
    <location>
        <position position="163"/>
    </location>
    <ligand>
        <name>substrate</name>
    </ligand>
</feature>
<feature type="binding site" evidence="1">
    <location>
        <position position="192"/>
    </location>
    <ligand>
        <name>substrate</name>
    </ligand>
</feature>
<feature type="binding site" evidence="1">
    <location>
        <position position="249"/>
    </location>
    <ligand>
        <name>substrate</name>
    </ligand>
</feature>
<feature type="site" description="Important for acyl-CoA specificity" evidence="1">
    <location>
        <position position="111"/>
    </location>
</feature>
<feature type="site" description="Important for substrate specificity" evidence="1">
    <location>
        <position position="192"/>
    </location>
</feature>
<accession>A1S5C5</accession>
<reference key="1">
    <citation type="submission" date="2006-12" db="EMBL/GenBank/DDBJ databases">
        <title>Complete sequence of Shewanella amazonensis SB2B.</title>
        <authorList>
            <consortium name="US DOE Joint Genome Institute"/>
            <person name="Copeland A."/>
            <person name="Lucas S."/>
            <person name="Lapidus A."/>
            <person name="Barry K."/>
            <person name="Detter J.C."/>
            <person name="Glavina del Rio T."/>
            <person name="Hammon N."/>
            <person name="Israni S."/>
            <person name="Dalin E."/>
            <person name="Tice H."/>
            <person name="Pitluck S."/>
            <person name="Munk A.C."/>
            <person name="Brettin T."/>
            <person name="Bruce D."/>
            <person name="Han C."/>
            <person name="Tapia R."/>
            <person name="Gilna P."/>
            <person name="Schmutz J."/>
            <person name="Larimer F."/>
            <person name="Land M."/>
            <person name="Hauser L."/>
            <person name="Kyrpides N."/>
            <person name="Mikhailova N."/>
            <person name="Fredrickson J."/>
            <person name="Richardson P."/>
        </authorList>
    </citation>
    <scope>NUCLEOTIDE SEQUENCE [LARGE SCALE GENOMIC DNA]</scope>
    <source>
        <strain>ATCC BAA-1098 / SB2B</strain>
    </source>
</reference>